<keyword id="KW-0030">Aminoacyl-tRNA synthetase</keyword>
<keyword id="KW-0067">ATP-binding</keyword>
<keyword id="KW-0963">Cytoplasm</keyword>
<keyword id="KW-0436">Ligase</keyword>
<keyword id="KW-0479">Metal-binding</keyword>
<keyword id="KW-0547">Nucleotide-binding</keyword>
<keyword id="KW-0648">Protein biosynthesis</keyword>
<keyword id="KW-1185">Reference proteome</keyword>
<keyword id="KW-0862">Zinc</keyword>
<name>SYI_SYMTH</name>
<protein>
    <recommendedName>
        <fullName evidence="1">Isoleucine--tRNA ligase</fullName>
        <ecNumber evidence="1">6.1.1.5</ecNumber>
    </recommendedName>
    <alternativeName>
        <fullName evidence="1">Isoleucyl-tRNA synthetase</fullName>
        <shortName evidence="1">IleRS</shortName>
    </alternativeName>
</protein>
<dbReference type="EC" id="6.1.1.5" evidence="1"/>
<dbReference type="EMBL" id="AP006840">
    <property type="protein sequence ID" value="BAD40216.1"/>
    <property type="molecule type" value="Genomic_DNA"/>
</dbReference>
<dbReference type="RefSeq" id="WP_011195362.1">
    <property type="nucleotide sequence ID" value="NC_006177.1"/>
</dbReference>
<dbReference type="SMR" id="Q67Q27"/>
<dbReference type="STRING" id="292459.STH1231"/>
<dbReference type="KEGG" id="sth:STH1231"/>
<dbReference type="eggNOG" id="COG0060">
    <property type="taxonomic scope" value="Bacteria"/>
</dbReference>
<dbReference type="HOGENOM" id="CLU_001493_7_1_9"/>
<dbReference type="OrthoDB" id="9810365at2"/>
<dbReference type="Proteomes" id="UP000000417">
    <property type="component" value="Chromosome"/>
</dbReference>
<dbReference type="GO" id="GO:0005829">
    <property type="term" value="C:cytosol"/>
    <property type="evidence" value="ECO:0007669"/>
    <property type="project" value="TreeGrafter"/>
</dbReference>
<dbReference type="GO" id="GO:0002161">
    <property type="term" value="F:aminoacyl-tRNA deacylase activity"/>
    <property type="evidence" value="ECO:0007669"/>
    <property type="project" value="InterPro"/>
</dbReference>
<dbReference type="GO" id="GO:0005524">
    <property type="term" value="F:ATP binding"/>
    <property type="evidence" value="ECO:0007669"/>
    <property type="project" value="UniProtKB-UniRule"/>
</dbReference>
<dbReference type="GO" id="GO:0004822">
    <property type="term" value="F:isoleucine-tRNA ligase activity"/>
    <property type="evidence" value="ECO:0007669"/>
    <property type="project" value="UniProtKB-UniRule"/>
</dbReference>
<dbReference type="GO" id="GO:0000049">
    <property type="term" value="F:tRNA binding"/>
    <property type="evidence" value="ECO:0007669"/>
    <property type="project" value="InterPro"/>
</dbReference>
<dbReference type="GO" id="GO:0008270">
    <property type="term" value="F:zinc ion binding"/>
    <property type="evidence" value="ECO:0007669"/>
    <property type="project" value="UniProtKB-UniRule"/>
</dbReference>
<dbReference type="GO" id="GO:0006428">
    <property type="term" value="P:isoleucyl-tRNA aminoacylation"/>
    <property type="evidence" value="ECO:0007669"/>
    <property type="project" value="UniProtKB-UniRule"/>
</dbReference>
<dbReference type="CDD" id="cd07960">
    <property type="entry name" value="Anticodon_Ia_Ile_BEm"/>
    <property type="match status" value="1"/>
</dbReference>
<dbReference type="CDD" id="cd00818">
    <property type="entry name" value="IleRS_core"/>
    <property type="match status" value="1"/>
</dbReference>
<dbReference type="FunFam" id="1.10.730.20:FF:000001">
    <property type="entry name" value="Isoleucine--tRNA ligase"/>
    <property type="match status" value="1"/>
</dbReference>
<dbReference type="FunFam" id="3.40.50.620:FF:000152">
    <property type="entry name" value="Isoleucine--tRNA ligase"/>
    <property type="match status" value="1"/>
</dbReference>
<dbReference type="Gene3D" id="1.10.730.20">
    <property type="match status" value="1"/>
</dbReference>
<dbReference type="Gene3D" id="2.170.220.10">
    <property type="match status" value="1"/>
</dbReference>
<dbReference type="Gene3D" id="3.40.50.620">
    <property type="entry name" value="HUPs"/>
    <property type="match status" value="2"/>
</dbReference>
<dbReference type="Gene3D" id="1.10.10.830">
    <property type="entry name" value="Ile-tRNA synthetase CP2 domain-like"/>
    <property type="match status" value="1"/>
</dbReference>
<dbReference type="Gene3D" id="3.90.740.10">
    <property type="entry name" value="Valyl/Leucyl/Isoleucyl-tRNA synthetase, editing domain"/>
    <property type="match status" value="1"/>
</dbReference>
<dbReference type="HAMAP" id="MF_02002">
    <property type="entry name" value="Ile_tRNA_synth_type1"/>
    <property type="match status" value="1"/>
</dbReference>
<dbReference type="InterPro" id="IPR001412">
    <property type="entry name" value="aa-tRNA-synth_I_CS"/>
</dbReference>
<dbReference type="InterPro" id="IPR002300">
    <property type="entry name" value="aa-tRNA-synth_Ia"/>
</dbReference>
<dbReference type="InterPro" id="IPR033708">
    <property type="entry name" value="Anticodon_Ile_BEm"/>
</dbReference>
<dbReference type="InterPro" id="IPR002301">
    <property type="entry name" value="Ile-tRNA-ligase"/>
</dbReference>
<dbReference type="InterPro" id="IPR023585">
    <property type="entry name" value="Ile-tRNA-ligase_type1"/>
</dbReference>
<dbReference type="InterPro" id="IPR050081">
    <property type="entry name" value="Ile-tRNA_ligase"/>
</dbReference>
<dbReference type="InterPro" id="IPR013155">
    <property type="entry name" value="M/V/L/I-tRNA-synth_anticd-bd"/>
</dbReference>
<dbReference type="InterPro" id="IPR014729">
    <property type="entry name" value="Rossmann-like_a/b/a_fold"/>
</dbReference>
<dbReference type="InterPro" id="IPR009080">
    <property type="entry name" value="tRNAsynth_Ia_anticodon-bd"/>
</dbReference>
<dbReference type="InterPro" id="IPR009008">
    <property type="entry name" value="Val/Leu/Ile-tRNA-synth_edit"/>
</dbReference>
<dbReference type="InterPro" id="IPR010663">
    <property type="entry name" value="Znf_FPG/IleRS"/>
</dbReference>
<dbReference type="NCBIfam" id="TIGR00392">
    <property type="entry name" value="ileS"/>
    <property type="match status" value="1"/>
</dbReference>
<dbReference type="PANTHER" id="PTHR42765:SF1">
    <property type="entry name" value="ISOLEUCINE--TRNA LIGASE, MITOCHONDRIAL"/>
    <property type="match status" value="1"/>
</dbReference>
<dbReference type="PANTHER" id="PTHR42765">
    <property type="entry name" value="SOLEUCYL-TRNA SYNTHETASE"/>
    <property type="match status" value="1"/>
</dbReference>
<dbReference type="Pfam" id="PF08264">
    <property type="entry name" value="Anticodon_1"/>
    <property type="match status" value="1"/>
</dbReference>
<dbReference type="Pfam" id="PF00133">
    <property type="entry name" value="tRNA-synt_1"/>
    <property type="match status" value="1"/>
</dbReference>
<dbReference type="Pfam" id="PF06827">
    <property type="entry name" value="zf-FPG_IleRS"/>
    <property type="match status" value="1"/>
</dbReference>
<dbReference type="PRINTS" id="PR00984">
    <property type="entry name" value="TRNASYNTHILE"/>
</dbReference>
<dbReference type="SUPFAM" id="SSF47323">
    <property type="entry name" value="Anticodon-binding domain of a subclass of class I aminoacyl-tRNA synthetases"/>
    <property type="match status" value="1"/>
</dbReference>
<dbReference type="SUPFAM" id="SSF52374">
    <property type="entry name" value="Nucleotidylyl transferase"/>
    <property type="match status" value="1"/>
</dbReference>
<dbReference type="SUPFAM" id="SSF50677">
    <property type="entry name" value="ValRS/IleRS/LeuRS editing domain"/>
    <property type="match status" value="1"/>
</dbReference>
<dbReference type="PROSITE" id="PS00178">
    <property type="entry name" value="AA_TRNA_LIGASE_I"/>
    <property type="match status" value="1"/>
</dbReference>
<gene>
    <name evidence="1" type="primary">ileS</name>
    <name type="ordered locus">STH1231</name>
</gene>
<comment type="function">
    <text evidence="1">Catalyzes the attachment of isoleucine to tRNA(Ile). As IleRS can inadvertently accommodate and process structurally similar amino acids such as valine, to avoid such errors it has two additional distinct tRNA(Ile)-dependent editing activities. One activity is designated as 'pretransfer' editing and involves the hydrolysis of activated Val-AMP. The other activity is designated 'posttransfer' editing and involves deacylation of mischarged Val-tRNA(Ile).</text>
</comment>
<comment type="catalytic activity">
    <reaction evidence="1">
        <text>tRNA(Ile) + L-isoleucine + ATP = L-isoleucyl-tRNA(Ile) + AMP + diphosphate</text>
        <dbReference type="Rhea" id="RHEA:11060"/>
        <dbReference type="Rhea" id="RHEA-COMP:9666"/>
        <dbReference type="Rhea" id="RHEA-COMP:9695"/>
        <dbReference type="ChEBI" id="CHEBI:30616"/>
        <dbReference type="ChEBI" id="CHEBI:33019"/>
        <dbReference type="ChEBI" id="CHEBI:58045"/>
        <dbReference type="ChEBI" id="CHEBI:78442"/>
        <dbReference type="ChEBI" id="CHEBI:78528"/>
        <dbReference type="ChEBI" id="CHEBI:456215"/>
        <dbReference type="EC" id="6.1.1.5"/>
    </reaction>
</comment>
<comment type="cofactor">
    <cofactor evidence="1">
        <name>Zn(2+)</name>
        <dbReference type="ChEBI" id="CHEBI:29105"/>
    </cofactor>
    <text evidence="1">Binds 1 zinc ion per subunit.</text>
</comment>
<comment type="subunit">
    <text evidence="1">Monomer.</text>
</comment>
<comment type="subcellular location">
    <subcellularLocation>
        <location evidence="1">Cytoplasm</location>
    </subcellularLocation>
</comment>
<comment type="domain">
    <text evidence="1">IleRS has two distinct active sites: one for aminoacylation and one for editing. The misactivated valine is translocated from the active site to the editing site, which sterically excludes the correctly activated isoleucine. The single editing site contains two valyl binding pockets, one specific for each substrate (Val-AMP or Val-tRNA(Ile)).</text>
</comment>
<comment type="similarity">
    <text evidence="1">Belongs to the class-I aminoacyl-tRNA synthetase family. IleS type 1 subfamily.</text>
</comment>
<reference key="1">
    <citation type="journal article" date="2004" name="Nucleic Acids Res.">
        <title>Genome sequence of Symbiobacterium thermophilum, an uncultivable bacterium that depends on microbial commensalism.</title>
        <authorList>
            <person name="Ueda K."/>
            <person name="Yamashita A."/>
            <person name="Ishikawa J."/>
            <person name="Shimada M."/>
            <person name="Watsuji T."/>
            <person name="Morimura K."/>
            <person name="Ikeda H."/>
            <person name="Hattori M."/>
            <person name="Beppu T."/>
        </authorList>
    </citation>
    <scope>NUCLEOTIDE SEQUENCE [LARGE SCALE GENOMIC DNA]</scope>
    <source>
        <strain>DSM 24528 / JCM 14929 / IAM 14863 / T</strain>
    </source>
</reference>
<sequence length="938" mass="106189">MAEKTDYKATLNMPRTDFPMRANLPTREPEQLKKWEEMDLYNLVQRATAGRPKFVLHDGPPYANGDIHLGTALNKILKDIIVKHATMAGYDAPYVPGWDMHGLPIELRALKDMNIDRRKIDPLELRAKCYEYAHHWLNVQREQFKRLGVRGDWENPYRTVAPEFEAKEVEVFGAMAAKGYIYRGLKPVYWCPYCETALAEAEIEYNEKTSYSIYVRFPVVDPRGKLPEGSYLVIWTTTPWTIPANLAVAVHPEVEYGVYATEKGNLVVATALAEKFFQAVNLPAAEPVATLKGADLEGITYRHLLYDRVSPVILGDHVTTEDGTGLVHTAPGHGHEDFEVGQKYGLPVLNPVNDQGVFTAEAGPFAGMFIEKANPEIIKALDEAGMLLGQGKIRHQYAHCWRCKNPVIYRATVQWFVKVEGFMDIAKEAMNHVRWIPDWGYNRMYAMIDGLADWCISRQRAWGLPIPILTCSACDEPSFEPKMFEKIAEIFRAEGSDAWWRRPAEDFMPEGGLTCKKCGGRTFHKEKDILDVWFDSGSSHVGVLETRPELTWPADLYLEGSDQHRGWFKSSLLTAVVARDGKPPYKAVLTHGFTVDEQGRKMSKSLGNVVDPADVIKRYGADILRLWVASTDYRHDMALSENILKQVADAYRKIRNTLRYLLGNLYDFNPDTDMVERDDLLEIDRWQMHRLQEVIRKVTEAYREYEYHIVYHTLNNYCAVDLSAVYLDILKDRLYTSAPASRERRSAQTVLYHVADALIRMLTPILTFTAEEAYSHLPKPAGSPPTSQLLMMPQPDPAYLDENLAAEWDRLMELRDAVQVVLERARVDKLIGSSQEAAVNLYASGGEGSWAELLDRHLPDLPSIFIVSDVKLFVGGQSAPSGTYFGEGPGDLSVEVVRAEGEKCERCWNYRKVGAIEQHPTLCERCAGVVLSLNLDNA</sequence>
<feature type="chain" id="PRO_0000098488" description="Isoleucine--tRNA ligase">
    <location>
        <begin position="1"/>
        <end position="938"/>
    </location>
</feature>
<feature type="short sequence motif" description="'HIGH' region">
    <location>
        <begin position="61"/>
        <end position="71"/>
    </location>
</feature>
<feature type="short sequence motif" description="'KMSKS' region">
    <location>
        <begin position="601"/>
        <end position="605"/>
    </location>
</feature>
<feature type="binding site" evidence="1">
    <location>
        <position position="559"/>
    </location>
    <ligand>
        <name>L-isoleucyl-5'-AMP</name>
        <dbReference type="ChEBI" id="CHEBI:178002"/>
    </ligand>
</feature>
<feature type="binding site" evidence="1">
    <location>
        <position position="604"/>
    </location>
    <ligand>
        <name>ATP</name>
        <dbReference type="ChEBI" id="CHEBI:30616"/>
    </ligand>
</feature>
<feature type="binding site" evidence="1">
    <location>
        <position position="904"/>
    </location>
    <ligand>
        <name>Zn(2+)</name>
        <dbReference type="ChEBI" id="CHEBI:29105"/>
    </ligand>
</feature>
<feature type="binding site" evidence="1">
    <location>
        <position position="907"/>
    </location>
    <ligand>
        <name>Zn(2+)</name>
        <dbReference type="ChEBI" id="CHEBI:29105"/>
    </ligand>
</feature>
<feature type="binding site" evidence="1">
    <location>
        <position position="923"/>
    </location>
    <ligand>
        <name>Zn(2+)</name>
        <dbReference type="ChEBI" id="CHEBI:29105"/>
    </ligand>
</feature>
<feature type="binding site" evidence="1">
    <location>
        <position position="926"/>
    </location>
    <ligand>
        <name>Zn(2+)</name>
        <dbReference type="ChEBI" id="CHEBI:29105"/>
    </ligand>
</feature>
<proteinExistence type="inferred from homology"/>
<accession>Q67Q27</accession>
<evidence type="ECO:0000255" key="1">
    <source>
        <dbReference type="HAMAP-Rule" id="MF_02002"/>
    </source>
</evidence>
<organism>
    <name type="scientific">Symbiobacterium thermophilum (strain DSM 24528 / JCM 14929 / IAM 14863 / T)</name>
    <dbReference type="NCBI Taxonomy" id="292459"/>
    <lineage>
        <taxon>Bacteria</taxon>
        <taxon>Bacillati</taxon>
        <taxon>Bacillota</taxon>
        <taxon>Clostridia</taxon>
        <taxon>Eubacteriales</taxon>
        <taxon>Symbiobacteriaceae</taxon>
        <taxon>Symbiobacterium</taxon>
    </lineage>
</organism>